<organism>
    <name type="scientific">Escherichia coli O157:H7</name>
    <dbReference type="NCBI Taxonomy" id="83334"/>
    <lineage>
        <taxon>Bacteria</taxon>
        <taxon>Pseudomonadati</taxon>
        <taxon>Pseudomonadota</taxon>
        <taxon>Gammaproteobacteria</taxon>
        <taxon>Enterobacterales</taxon>
        <taxon>Enterobacteriaceae</taxon>
        <taxon>Escherichia</taxon>
    </lineage>
</organism>
<reference key="1">
    <citation type="journal article" date="2001" name="Nature">
        <title>Genome sequence of enterohaemorrhagic Escherichia coli O157:H7.</title>
        <authorList>
            <person name="Perna N.T."/>
            <person name="Plunkett G. III"/>
            <person name="Burland V."/>
            <person name="Mau B."/>
            <person name="Glasner J.D."/>
            <person name="Rose D.J."/>
            <person name="Mayhew G.F."/>
            <person name="Evans P.S."/>
            <person name="Gregor J."/>
            <person name="Kirkpatrick H.A."/>
            <person name="Posfai G."/>
            <person name="Hackett J."/>
            <person name="Klink S."/>
            <person name="Boutin A."/>
            <person name="Shao Y."/>
            <person name="Miller L."/>
            <person name="Grotbeck E.J."/>
            <person name="Davis N.W."/>
            <person name="Lim A."/>
            <person name="Dimalanta E.T."/>
            <person name="Potamousis K."/>
            <person name="Apodaca J."/>
            <person name="Anantharaman T.S."/>
            <person name="Lin J."/>
            <person name="Yen G."/>
            <person name="Schwartz D.C."/>
            <person name="Welch R.A."/>
            <person name="Blattner F.R."/>
        </authorList>
    </citation>
    <scope>NUCLEOTIDE SEQUENCE [LARGE SCALE GENOMIC DNA]</scope>
    <source>
        <strain>O157:H7 / EDL933 / ATCC 700927 / EHEC</strain>
    </source>
</reference>
<reference key="2">
    <citation type="journal article" date="2001" name="DNA Res.">
        <title>Complete genome sequence of enterohemorrhagic Escherichia coli O157:H7 and genomic comparison with a laboratory strain K-12.</title>
        <authorList>
            <person name="Hayashi T."/>
            <person name="Makino K."/>
            <person name="Ohnishi M."/>
            <person name="Kurokawa K."/>
            <person name="Ishii K."/>
            <person name="Yokoyama K."/>
            <person name="Han C.-G."/>
            <person name="Ohtsubo E."/>
            <person name="Nakayama K."/>
            <person name="Murata T."/>
            <person name="Tanaka M."/>
            <person name="Tobe T."/>
            <person name="Iida T."/>
            <person name="Takami H."/>
            <person name="Honda T."/>
            <person name="Sasakawa C."/>
            <person name="Ogasawara N."/>
            <person name="Yasunaga T."/>
            <person name="Kuhara S."/>
            <person name="Shiba T."/>
            <person name="Hattori M."/>
            <person name="Shinagawa H."/>
        </authorList>
    </citation>
    <scope>NUCLEOTIDE SEQUENCE [LARGE SCALE GENOMIC DNA]</scope>
    <source>
        <strain>O157:H7 / Sakai / RIMD 0509952 / EHEC</strain>
    </source>
</reference>
<gene>
    <name evidence="1" type="primary">dsdA</name>
    <name type="ordered locus">Z3628</name>
    <name type="ordered locus">ECs3245</name>
</gene>
<dbReference type="EC" id="4.3.1.18" evidence="1"/>
<dbReference type="EMBL" id="AE005174">
    <property type="protein sequence ID" value="AAG57491.1"/>
    <property type="molecule type" value="Genomic_DNA"/>
</dbReference>
<dbReference type="EMBL" id="BA000007">
    <property type="protein sequence ID" value="BAB36668.1"/>
    <property type="molecule type" value="Genomic_DNA"/>
</dbReference>
<dbReference type="PIR" id="E91034">
    <property type="entry name" value="E91034"/>
</dbReference>
<dbReference type="PIR" id="G85878">
    <property type="entry name" value="G85878"/>
</dbReference>
<dbReference type="RefSeq" id="NP_311272.1">
    <property type="nucleotide sequence ID" value="NC_002695.1"/>
</dbReference>
<dbReference type="RefSeq" id="WP_000426437.1">
    <property type="nucleotide sequence ID" value="NZ_VOAI01000001.1"/>
</dbReference>
<dbReference type="SMR" id="Q8XCK5"/>
<dbReference type="STRING" id="155864.Z3628"/>
<dbReference type="GeneID" id="915655"/>
<dbReference type="KEGG" id="ece:Z3628"/>
<dbReference type="KEGG" id="ecs:ECs_3245"/>
<dbReference type="PATRIC" id="fig|386585.9.peg.3389"/>
<dbReference type="eggNOG" id="COG3048">
    <property type="taxonomic scope" value="Bacteria"/>
</dbReference>
<dbReference type="HOGENOM" id="CLU_035707_0_0_6"/>
<dbReference type="OMA" id="ESDPNCF"/>
<dbReference type="Proteomes" id="UP000000558">
    <property type="component" value="Chromosome"/>
</dbReference>
<dbReference type="Proteomes" id="UP000002519">
    <property type="component" value="Chromosome"/>
</dbReference>
<dbReference type="GO" id="GO:0008721">
    <property type="term" value="F:D-serine ammonia-lyase activity"/>
    <property type="evidence" value="ECO:0007669"/>
    <property type="project" value="UniProtKB-EC"/>
</dbReference>
<dbReference type="GO" id="GO:0016836">
    <property type="term" value="F:hydro-lyase activity"/>
    <property type="evidence" value="ECO:0007669"/>
    <property type="project" value="UniProtKB-UniRule"/>
</dbReference>
<dbReference type="GO" id="GO:0030170">
    <property type="term" value="F:pyridoxal phosphate binding"/>
    <property type="evidence" value="ECO:0007669"/>
    <property type="project" value="InterPro"/>
</dbReference>
<dbReference type="GO" id="GO:0036088">
    <property type="term" value="P:D-serine catabolic process"/>
    <property type="evidence" value="ECO:0007669"/>
    <property type="project" value="TreeGrafter"/>
</dbReference>
<dbReference type="GO" id="GO:0009097">
    <property type="term" value="P:isoleucine biosynthetic process"/>
    <property type="evidence" value="ECO:0007669"/>
    <property type="project" value="TreeGrafter"/>
</dbReference>
<dbReference type="CDD" id="cd06447">
    <property type="entry name" value="D-Ser-dehyd"/>
    <property type="match status" value="1"/>
</dbReference>
<dbReference type="FunFam" id="3.40.50.1100:FF:000018">
    <property type="entry name" value="D-serine dehydratase"/>
    <property type="match status" value="1"/>
</dbReference>
<dbReference type="Gene3D" id="3.40.50.1100">
    <property type="match status" value="2"/>
</dbReference>
<dbReference type="HAMAP" id="MF_01030">
    <property type="entry name" value="D_Ser_dehydrat"/>
    <property type="match status" value="1"/>
</dbReference>
<dbReference type="InterPro" id="IPR011780">
    <property type="entry name" value="D_Ser_am_lyase"/>
</dbReference>
<dbReference type="InterPro" id="IPR050147">
    <property type="entry name" value="Ser/Thr_Dehydratase"/>
</dbReference>
<dbReference type="InterPro" id="IPR000634">
    <property type="entry name" value="Ser/Thr_deHydtase_PyrdxlP-BS"/>
</dbReference>
<dbReference type="InterPro" id="IPR001926">
    <property type="entry name" value="TrpB-like_PALP"/>
</dbReference>
<dbReference type="InterPro" id="IPR036052">
    <property type="entry name" value="TrpB-like_PALP_sf"/>
</dbReference>
<dbReference type="NCBIfam" id="TIGR02035">
    <property type="entry name" value="D_Ser_am_lyase"/>
    <property type="match status" value="1"/>
</dbReference>
<dbReference type="NCBIfam" id="NF002823">
    <property type="entry name" value="PRK02991.1"/>
    <property type="match status" value="1"/>
</dbReference>
<dbReference type="PANTHER" id="PTHR48078:SF9">
    <property type="entry name" value="D-SERINE DEHYDRATASE"/>
    <property type="match status" value="1"/>
</dbReference>
<dbReference type="PANTHER" id="PTHR48078">
    <property type="entry name" value="THREONINE DEHYDRATASE, MITOCHONDRIAL-RELATED"/>
    <property type="match status" value="1"/>
</dbReference>
<dbReference type="Pfam" id="PF00291">
    <property type="entry name" value="PALP"/>
    <property type="match status" value="1"/>
</dbReference>
<dbReference type="SUPFAM" id="SSF53686">
    <property type="entry name" value="Tryptophan synthase beta subunit-like PLP-dependent enzymes"/>
    <property type="match status" value="1"/>
</dbReference>
<dbReference type="PROSITE" id="PS00165">
    <property type="entry name" value="DEHYDRATASE_SER_THR"/>
    <property type="match status" value="1"/>
</dbReference>
<name>SDHD_ECO57</name>
<accession>Q8XCK5</accession>
<feature type="chain" id="PRO_0000185613" description="D-serine dehydratase">
    <location>
        <begin position="1"/>
        <end position="442"/>
    </location>
</feature>
<feature type="modified residue" description="N6-(pyridoxal phosphate)lysine" evidence="1">
    <location>
        <position position="118"/>
    </location>
</feature>
<comment type="catalytic activity">
    <reaction evidence="1">
        <text>D-serine = pyruvate + NH4(+)</text>
        <dbReference type="Rhea" id="RHEA:13977"/>
        <dbReference type="ChEBI" id="CHEBI:15361"/>
        <dbReference type="ChEBI" id="CHEBI:28938"/>
        <dbReference type="ChEBI" id="CHEBI:35247"/>
        <dbReference type="EC" id="4.3.1.18"/>
    </reaction>
</comment>
<comment type="cofactor">
    <cofactor evidence="1">
        <name>pyridoxal 5'-phosphate</name>
        <dbReference type="ChEBI" id="CHEBI:597326"/>
    </cofactor>
</comment>
<comment type="subunit">
    <text evidence="1">Monomer.</text>
</comment>
<comment type="similarity">
    <text evidence="1">Belongs to the serine/threonine dehydratase family. DsdA subfamily.</text>
</comment>
<proteinExistence type="inferred from homology"/>
<protein>
    <recommendedName>
        <fullName evidence="1">D-serine dehydratase</fullName>
        <ecNumber evidence="1">4.3.1.18</ecNumber>
    </recommendedName>
    <alternativeName>
        <fullName evidence="1">D-serine deaminase</fullName>
        <shortName evidence="1">DSD</shortName>
    </alternativeName>
</protein>
<evidence type="ECO:0000255" key="1">
    <source>
        <dbReference type="HAMAP-Rule" id="MF_01030"/>
    </source>
</evidence>
<keyword id="KW-0456">Lyase</keyword>
<keyword id="KW-0663">Pyridoxal phosphate</keyword>
<keyword id="KW-1185">Reference proteome</keyword>
<sequence>MENAKMNSLIAQYPLVKDLVALKETTWFNPGTTSLAEGLPYVGLTEQDVQDAHARLSRFAPYLAKAFPETAATGGIIESELVAIPAMQKRLEKEYQQPISGQLLLKKDSHLPISGSIKARGGIYEVLAHAEKLALEAGLLTLEDDYSKLLSPEFKQFFSQYSIAVGSTGNLGLSIGIMSARIGFKVTVHMSADARAWKKAKLRSHGVTVVEYEQDYGVAVEEGRKAAQSDPNCFFIDDENSRTLFLGYSVAGQRLKAQFAEQGRIVDADNPLFVYLPCGVGGGPGGVAFGLKLAFGDHVHCFFAEPTHSPCMLLGVHTGLHDQISVQDIGIDNLTAADGLAVGRASGFVGRAMERLLDGFYTLSDQTMYDMLGWLAQEEGIRLEPSALAGMAGPQRVCASVSYQQMHGFSAEQLRNATHLVWATGGGMVPEEEMEQYLAKGR</sequence>